<keyword id="KW-0325">Glycoprotein</keyword>
<keyword id="KW-0378">Hydrolase</keyword>
<keyword id="KW-0645">Protease</keyword>
<keyword id="KW-0964">Secreted</keyword>
<keyword id="KW-0720">Serine protease</keyword>
<keyword id="KW-0732">Signal</keyword>
<keyword id="KW-0843">Virulence</keyword>
<keyword id="KW-0865">Zymogen</keyword>
<sequence>MVCLKTLSVFLAAFAAADARAVFKTQGHKNSEMIPDNYIVVMKDGVSQDDFKAHISSVASIHSTNKAKRGTNTQGMKREFDIMNWRGYHGHFDRDTLEEILNDSKVDYVEQDQVVRISGLVTQRSAPSWGLGRVSHRQAGSRDYVFDDSAGRGVTIYGVDTGIDINHQDFRGRARWGTNTADRDNADRHGHGTHTASTFAGTAYGIAKNANIVAVKVLGSDGSGSTSGIIAGINYCVQDAQQRGILGKAAMNLSLGGGFSQANNDAVTRAQNAGIFVAVAAGNDNRDARNYSPASAPAVCTVASSTINDSKSSFSNWGPVVDIYAPGSDIIAARPGGGSTTMSGTSMASPHVAGMGAYMIGMGADPRQVCDRLKQLATAAIRNPGSSTTNRLLYNGSGQ</sequence>
<name>SUB4_TRIVH</name>
<dbReference type="EC" id="3.4.21.-"/>
<dbReference type="EMBL" id="ACYE01000145">
    <property type="protein sequence ID" value="EFE42473.1"/>
    <property type="molecule type" value="Genomic_DNA"/>
</dbReference>
<dbReference type="RefSeq" id="XP_003023091.1">
    <property type="nucleotide sequence ID" value="XM_003023045.1"/>
</dbReference>
<dbReference type="SMR" id="D4D6Q4"/>
<dbReference type="GlyCosmos" id="D4D6Q4">
    <property type="glycosylation" value="3 sites, No reported glycans"/>
</dbReference>
<dbReference type="GeneID" id="9583111"/>
<dbReference type="KEGG" id="tve:TRV_02781"/>
<dbReference type="HOGENOM" id="CLU_011263_1_3_1"/>
<dbReference type="OrthoDB" id="4572at34384"/>
<dbReference type="Proteomes" id="UP000008383">
    <property type="component" value="Unassembled WGS sequence"/>
</dbReference>
<dbReference type="GO" id="GO:0005576">
    <property type="term" value="C:extracellular region"/>
    <property type="evidence" value="ECO:0007669"/>
    <property type="project" value="UniProtKB-SubCell"/>
</dbReference>
<dbReference type="GO" id="GO:0004252">
    <property type="term" value="F:serine-type endopeptidase activity"/>
    <property type="evidence" value="ECO:0007669"/>
    <property type="project" value="InterPro"/>
</dbReference>
<dbReference type="GO" id="GO:0006508">
    <property type="term" value="P:proteolysis"/>
    <property type="evidence" value="ECO:0007669"/>
    <property type="project" value="UniProtKB-KW"/>
</dbReference>
<dbReference type="CDD" id="cd04077">
    <property type="entry name" value="Peptidases_S8_PCSK9_ProteinaseK_like"/>
    <property type="match status" value="1"/>
</dbReference>
<dbReference type="FunFam" id="3.40.50.200:FF:000014">
    <property type="entry name" value="Proteinase K"/>
    <property type="match status" value="1"/>
</dbReference>
<dbReference type="Gene3D" id="3.30.70.80">
    <property type="entry name" value="Peptidase S8 propeptide/proteinase inhibitor I9"/>
    <property type="match status" value="1"/>
</dbReference>
<dbReference type="Gene3D" id="3.40.50.200">
    <property type="entry name" value="Peptidase S8/S53 domain"/>
    <property type="match status" value="1"/>
</dbReference>
<dbReference type="InterPro" id="IPR034193">
    <property type="entry name" value="PCSK9_ProteinaseK-like"/>
</dbReference>
<dbReference type="InterPro" id="IPR000209">
    <property type="entry name" value="Peptidase_S8/S53_dom"/>
</dbReference>
<dbReference type="InterPro" id="IPR036852">
    <property type="entry name" value="Peptidase_S8/S53_dom_sf"/>
</dbReference>
<dbReference type="InterPro" id="IPR023828">
    <property type="entry name" value="Peptidase_S8_Ser-AS"/>
</dbReference>
<dbReference type="InterPro" id="IPR050131">
    <property type="entry name" value="Peptidase_S8_subtilisin-like"/>
</dbReference>
<dbReference type="InterPro" id="IPR015500">
    <property type="entry name" value="Peptidase_S8_subtilisin-rel"/>
</dbReference>
<dbReference type="InterPro" id="IPR010259">
    <property type="entry name" value="S8pro/Inhibitor_I9"/>
</dbReference>
<dbReference type="InterPro" id="IPR037045">
    <property type="entry name" value="S8pro/Inhibitor_I9_sf"/>
</dbReference>
<dbReference type="PANTHER" id="PTHR43806:SF11">
    <property type="entry name" value="CEREVISIN-RELATED"/>
    <property type="match status" value="1"/>
</dbReference>
<dbReference type="PANTHER" id="PTHR43806">
    <property type="entry name" value="PEPTIDASE S8"/>
    <property type="match status" value="1"/>
</dbReference>
<dbReference type="Pfam" id="PF05922">
    <property type="entry name" value="Inhibitor_I9"/>
    <property type="match status" value="1"/>
</dbReference>
<dbReference type="Pfam" id="PF00082">
    <property type="entry name" value="Peptidase_S8"/>
    <property type="match status" value="1"/>
</dbReference>
<dbReference type="PRINTS" id="PR00723">
    <property type="entry name" value="SUBTILISIN"/>
</dbReference>
<dbReference type="SUPFAM" id="SSF54897">
    <property type="entry name" value="Protease propeptides/inhibitors"/>
    <property type="match status" value="1"/>
</dbReference>
<dbReference type="SUPFAM" id="SSF52743">
    <property type="entry name" value="Subtilisin-like"/>
    <property type="match status" value="1"/>
</dbReference>
<dbReference type="PROSITE" id="PS51892">
    <property type="entry name" value="SUBTILASE"/>
    <property type="match status" value="1"/>
</dbReference>
<dbReference type="PROSITE" id="PS00138">
    <property type="entry name" value="SUBTILASE_SER"/>
    <property type="match status" value="1"/>
</dbReference>
<proteinExistence type="inferred from homology"/>
<gene>
    <name type="primary">SUB4</name>
    <name type="ORF">TRV_02781</name>
</gene>
<organism>
    <name type="scientific">Trichophyton verrucosum (strain HKI 0517)</name>
    <dbReference type="NCBI Taxonomy" id="663202"/>
    <lineage>
        <taxon>Eukaryota</taxon>
        <taxon>Fungi</taxon>
        <taxon>Dikarya</taxon>
        <taxon>Ascomycota</taxon>
        <taxon>Pezizomycotina</taxon>
        <taxon>Eurotiomycetes</taxon>
        <taxon>Eurotiomycetidae</taxon>
        <taxon>Onygenales</taxon>
        <taxon>Arthrodermataceae</taxon>
        <taxon>Trichophyton</taxon>
    </lineage>
</organism>
<feature type="signal peptide" evidence="2">
    <location>
        <begin position="1"/>
        <end position="19"/>
    </location>
</feature>
<feature type="propeptide" id="PRO_0000397792" evidence="1">
    <location>
        <begin position="20"/>
        <end position="118"/>
    </location>
</feature>
<feature type="chain" id="PRO_0000397793" description="Subtilisin-like protease 4">
    <location>
        <begin position="119"/>
        <end position="399"/>
    </location>
</feature>
<feature type="domain" description="Inhibitor I9" evidence="2">
    <location>
        <begin position="38"/>
        <end position="117"/>
    </location>
</feature>
<feature type="domain" description="Peptidase S8" evidence="3">
    <location>
        <begin position="128"/>
        <end position="399"/>
    </location>
</feature>
<feature type="active site" description="Charge relay system" evidence="3">
    <location>
        <position position="160"/>
    </location>
</feature>
<feature type="active site" description="Charge relay system" evidence="3">
    <location>
        <position position="191"/>
    </location>
</feature>
<feature type="active site" description="Charge relay system" evidence="3">
    <location>
        <position position="346"/>
    </location>
</feature>
<feature type="glycosylation site" description="N-linked (GlcNAc...) asparagine" evidence="2">
    <location>
        <position position="252"/>
    </location>
</feature>
<feature type="glycosylation site" description="N-linked (GlcNAc...) asparagine" evidence="2">
    <location>
        <position position="308"/>
    </location>
</feature>
<feature type="glycosylation site" description="N-linked (GlcNAc...) asparagine" evidence="2">
    <location>
        <position position="395"/>
    </location>
</feature>
<protein>
    <recommendedName>
        <fullName>Subtilisin-like protease 4</fullName>
        <ecNumber>3.4.21.-</ecNumber>
    </recommendedName>
</protein>
<evidence type="ECO:0000250" key="1"/>
<evidence type="ECO:0000255" key="2"/>
<evidence type="ECO:0000255" key="3">
    <source>
        <dbReference type="PROSITE-ProRule" id="PRU01240"/>
    </source>
</evidence>
<evidence type="ECO:0000305" key="4"/>
<comment type="function">
    <text evidence="1">Secreted subtilisin-like serine protease with keratinolytic activity that contributes to pathogenicity.</text>
</comment>
<comment type="subcellular location">
    <subcellularLocation>
        <location evidence="1">Secreted</location>
    </subcellularLocation>
</comment>
<comment type="similarity">
    <text evidence="4">Belongs to the peptidase S8 family.</text>
</comment>
<reference key="1">
    <citation type="journal article" date="2011" name="Genome Biol.">
        <title>Comparative and functional genomics provide insights into the pathogenicity of dermatophytic fungi.</title>
        <authorList>
            <person name="Burmester A."/>
            <person name="Shelest E."/>
            <person name="Gloeckner G."/>
            <person name="Heddergott C."/>
            <person name="Schindler S."/>
            <person name="Staib P."/>
            <person name="Heidel A."/>
            <person name="Felder M."/>
            <person name="Petzold A."/>
            <person name="Szafranski K."/>
            <person name="Feuermann M."/>
            <person name="Pedruzzi I."/>
            <person name="Priebe S."/>
            <person name="Groth M."/>
            <person name="Winkler R."/>
            <person name="Li W."/>
            <person name="Kniemeyer O."/>
            <person name="Schroeckh V."/>
            <person name="Hertweck C."/>
            <person name="Hube B."/>
            <person name="White T.C."/>
            <person name="Platzer M."/>
            <person name="Guthke R."/>
            <person name="Heitman J."/>
            <person name="Woestemeyer J."/>
            <person name="Zipfel P.F."/>
            <person name="Monod M."/>
            <person name="Brakhage A.A."/>
        </authorList>
    </citation>
    <scope>NUCLEOTIDE SEQUENCE [LARGE SCALE GENOMIC DNA]</scope>
    <source>
        <strain>HKI 0517</strain>
    </source>
</reference>
<accession>D4D6Q4</accession>